<evidence type="ECO:0000255" key="1">
    <source>
        <dbReference type="HAMAP-Rule" id="MF_00580"/>
    </source>
</evidence>
<sequence>MNLRPLHDRVIVKRVENETKTASGIVIPDSAAEKPDQGEVLAVGPGKKNDKGELGAMAVKVGDRVLFGKYSGQTVKVDGDELLVMKEEDLFAVVEK</sequence>
<comment type="function">
    <text evidence="1">Together with the chaperonin GroEL, plays an essential role in assisting protein folding. The GroEL-GroES system forms a nano-cage that allows encapsulation of the non-native substrate proteins and provides a physical environment optimized to promote and accelerate protein folding. GroES binds to the apical surface of the GroEL ring, thereby capping the opening of the GroEL channel.</text>
</comment>
<comment type="subunit">
    <text evidence="1">Heptamer of 7 subunits arranged in a ring. Interacts with the chaperonin GroEL.</text>
</comment>
<comment type="subcellular location">
    <subcellularLocation>
        <location evidence="1">Cytoplasm</location>
    </subcellularLocation>
</comment>
<comment type="similarity">
    <text evidence="1">Belongs to the GroES chaperonin family.</text>
</comment>
<accession>A1VJZ9</accession>
<gene>
    <name evidence="1" type="primary">groES</name>
    <name evidence="1" type="synonym">groS</name>
    <name type="ordered locus">Pnap_0658</name>
</gene>
<feature type="chain" id="PRO_1000025322" description="Co-chaperonin GroES">
    <location>
        <begin position="1"/>
        <end position="96"/>
    </location>
</feature>
<organism>
    <name type="scientific">Polaromonas naphthalenivorans (strain CJ2)</name>
    <dbReference type="NCBI Taxonomy" id="365044"/>
    <lineage>
        <taxon>Bacteria</taxon>
        <taxon>Pseudomonadati</taxon>
        <taxon>Pseudomonadota</taxon>
        <taxon>Betaproteobacteria</taxon>
        <taxon>Burkholderiales</taxon>
        <taxon>Comamonadaceae</taxon>
        <taxon>Polaromonas</taxon>
    </lineage>
</organism>
<protein>
    <recommendedName>
        <fullName evidence="1">Co-chaperonin GroES</fullName>
    </recommendedName>
    <alternativeName>
        <fullName evidence="1">10 kDa chaperonin</fullName>
    </alternativeName>
    <alternativeName>
        <fullName evidence="1">Chaperonin-10</fullName>
        <shortName evidence="1">Cpn10</shortName>
    </alternativeName>
</protein>
<dbReference type="EMBL" id="CP000529">
    <property type="protein sequence ID" value="ABM35977.1"/>
    <property type="molecule type" value="Genomic_DNA"/>
</dbReference>
<dbReference type="RefSeq" id="WP_011800072.1">
    <property type="nucleotide sequence ID" value="NC_008781.1"/>
</dbReference>
<dbReference type="SMR" id="A1VJZ9"/>
<dbReference type="STRING" id="365044.Pnap_0658"/>
<dbReference type="KEGG" id="pna:Pnap_0658"/>
<dbReference type="eggNOG" id="COG0234">
    <property type="taxonomic scope" value="Bacteria"/>
</dbReference>
<dbReference type="HOGENOM" id="CLU_132825_1_0_4"/>
<dbReference type="OrthoDB" id="9806791at2"/>
<dbReference type="Proteomes" id="UP000000644">
    <property type="component" value="Chromosome"/>
</dbReference>
<dbReference type="GO" id="GO:0005737">
    <property type="term" value="C:cytoplasm"/>
    <property type="evidence" value="ECO:0007669"/>
    <property type="project" value="UniProtKB-SubCell"/>
</dbReference>
<dbReference type="GO" id="GO:0005524">
    <property type="term" value="F:ATP binding"/>
    <property type="evidence" value="ECO:0007669"/>
    <property type="project" value="InterPro"/>
</dbReference>
<dbReference type="GO" id="GO:0046872">
    <property type="term" value="F:metal ion binding"/>
    <property type="evidence" value="ECO:0007669"/>
    <property type="project" value="TreeGrafter"/>
</dbReference>
<dbReference type="GO" id="GO:0044183">
    <property type="term" value="F:protein folding chaperone"/>
    <property type="evidence" value="ECO:0007669"/>
    <property type="project" value="InterPro"/>
</dbReference>
<dbReference type="GO" id="GO:0051087">
    <property type="term" value="F:protein-folding chaperone binding"/>
    <property type="evidence" value="ECO:0007669"/>
    <property type="project" value="TreeGrafter"/>
</dbReference>
<dbReference type="GO" id="GO:0051082">
    <property type="term" value="F:unfolded protein binding"/>
    <property type="evidence" value="ECO:0007669"/>
    <property type="project" value="TreeGrafter"/>
</dbReference>
<dbReference type="GO" id="GO:0051085">
    <property type="term" value="P:chaperone cofactor-dependent protein refolding"/>
    <property type="evidence" value="ECO:0007669"/>
    <property type="project" value="TreeGrafter"/>
</dbReference>
<dbReference type="CDD" id="cd00320">
    <property type="entry name" value="cpn10"/>
    <property type="match status" value="1"/>
</dbReference>
<dbReference type="FunFam" id="2.30.33.40:FF:000001">
    <property type="entry name" value="10 kDa chaperonin"/>
    <property type="match status" value="1"/>
</dbReference>
<dbReference type="Gene3D" id="2.30.33.40">
    <property type="entry name" value="GroES chaperonin"/>
    <property type="match status" value="1"/>
</dbReference>
<dbReference type="HAMAP" id="MF_00580">
    <property type="entry name" value="CH10"/>
    <property type="match status" value="1"/>
</dbReference>
<dbReference type="InterPro" id="IPR020818">
    <property type="entry name" value="Chaperonin_GroES"/>
</dbReference>
<dbReference type="InterPro" id="IPR037124">
    <property type="entry name" value="Chaperonin_GroES_sf"/>
</dbReference>
<dbReference type="InterPro" id="IPR018369">
    <property type="entry name" value="Chaprnonin_Cpn10_CS"/>
</dbReference>
<dbReference type="InterPro" id="IPR011032">
    <property type="entry name" value="GroES-like_sf"/>
</dbReference>
<dbReference type="NCBIfam" id="NF001527">
    <property type="entry name" value="PRK00364.1-2"/>
    <property type="match status" value="1"/>
</dbReference>
<dbReference type="NCBIfam" id="NF001529">
    <property type="entry name" value="PRK00364.1-5"/>
    <property type="match status" value="1"/>
</dbReference>
<dbReference type="NCBIfam" id="NF001531">
    <property type="entry name" value="PRK00364.2-2"/>
    <property type="match status" value="1"/>
</dbReference>
<dbReference type="NCBIfam" id="NF001533">
    <property type="entry name" value="PRK00364.2-4"/>
    <property type="match status" value="1"/>
</dbReference>
<dbReference type="NCBIfam" id="NF001534">
    <property type="entry name" value="PRK00364.2-5"/>
    <property type="match status" value="1"/>
</dbReference>
<dbReference type="PANTHER" id="PTHR10772">
    <property type="entry name" value="10 KDA HEAT SHOCK PROTEIN"/>
    <property type="match status" value="1"/>
</dbReference>
<dbReference type="PANTHER" id="PTHR10772:SF58">
    <property type="entry name" value="CO-CHAPERONIN GROES"/>
    <property type="match status" value="1"/>
</dbReference>
<dbReference type="Pfam" id="PF00166">
    <property type="entry name" value="Cpn10"/>
    <property type="match status" value="1"/>
</dbReference>
<dbReference type="PRINTS" id="PR00297">
    <property type="entry name" value="CHAPERONIN10"/>
</dbReference>
<dbReference type="SMART" id="SM00883">
    <property type="entry name" value="Cpn10"/>
    <property type="match status" value="1"/>
</dbReference>
<dbReference type="SUPFAM" id="SSF50129">
    <property type="entry name" value="GroES-like"/>
    <property type="match status" value="1"/>
</dbReference>
<dbReference type="PROSITE" id="PS00681">
    <property type="entry name" value="CHAPERONINS_CPN10"/>
    <property type="match status" value="1"/>
</dbReference>
<proteinExistence type="inferred from homology"/>
<name>CH10_POLNA</name>
<keyword id="KW-0143">Chaperone</keyword>
<keyword id="KW-0963">Cytoplasm</keyword>
<keyword id="KW-1185">Reference proteome</keyword>
<reference key="1">
    <citation type="journal article" date="2009" name="Environ. Microbiol.">
        <title>The genome of Polaromonas naphthalenivorans strain CJ2, isolated from coal tar-contaminated sediment, reveals physiological and metabolic versatility and evolution through extensive horizontal gene transfer.</title>
        <authorList>
            <person name="Yagi J.M."/>
            <person name="Sims D."/>
            <person name="Brettin T."/>
            <person name="Bruce D."/>
            <person name="Madsen E.L."/>
        </authorList>
    </citation>
    <scope>NUCLEOTIDE SEQUENCE [LARGE SCALE GENOMIC DNA]</scope>
    <source>
        <strain>CJ2</strain>
    </source>
</reference>